<comment type="function">
    <text evidence="1">Cleaves acetylacetone to equimolar amounts of methylglyoxal and acetate, consuming one equivalent of molecular oxygen.</text>
</comment>
<comment type="catalytic activity">
    <reaction evidence="1">
        <text>acetylacetone + O2 = methylglyoxal + acetate + H(+)</text>
        <dbReference type="Rhea" id="RHEA:12877"/>
        <dbReference type="ChEBI" id="CHEBI:14750"/>
        <dbReference type="ChEBI" id="CHEBI:15378"/>
        <dbReference type="ChEBI" id="CHEBI:15379"/>
        <dbReference type="ChEBI" id="CHEBI:17158"/>
        <dbReference type="ChEBI" id="CHEBI:30089"/>
        <dbReference type="EC" id="1.13.11.50"/>
    </reaction>
</comment>
<comment type="cofactor">
    <cofactor evidence="1">
        <name>Fe cation</name>
        <dbReference type="ChEBI" id="CHEBI:24875"/>
    </cofactor>
    <text evidence="1">Binds 1 Fe cation per subunit.</text>
</comment>
<comment type="pathway">
    <text>Xenobiotic degradation; acetylacetone degradation.</text>
</comment>
<comment type="subunit">
    <text evidence="1">Homotetramer.</text>
</comment>
<comment type="mass spectrometry"/>
<reference key="1">
    <citation type="journal article" date="2003" name="Biochem. J.">
        <title>Acetylacetone-cleaving enzyme Dke1: a novel C-C-bond-cleaving enzyme from Acinetobacter johnsonii.</title>
        <authorList>
            <person name="Straganz G.D."/>
            <person name="Glieder A."/>
            <person name="Brecker L."/>
            <person name="Ribbons D.W."/>
            <person name="Steiner W."/>
        </authorList>
    </citation>
    <scope>NUCLEOTIDE SEQUENCE [GENOMIC DNA]</scope>
    <scope>PARTIAL PROTEIN SEQUENCE</scope>
    <scope>FUNCTION</scope>
    <scope>CATALYTIC ACTIVITY</scope>
    <scope>COFACTOR</scope>
    <scope>SUBUNIT</scope>
    <scope>CHARACTERIZATION</scope>
    <scope>MASS SPECTROMETRY</scope>
    <source>
        <strain>DSMZ 98-849</strain>
    </source>
</reference>
<dbReference type="EC" id="1.13.11.50" evidence="1"/>
<dbReference type="EMBL" id="AF489107">
    <property type="protein sequence ID" value="AAN45859.1"/>
    <property type="molecule type" value="Genomic_DNA"/>
</dbReference>
<dbReference type="PDB" id="3BAL">
    <property type="method" value="X-ray"/>
    <property type="resolution" value="1.95 A"/>
    <property type="chains" value="A/B/C/D=1-153"/>
</dbReference>
<dbReference type="PDBsum" id="3BAL"/>
<dbReference type="SMR" id="Q8GNT2"/>
<dbReference type="KEGG" id="ag:AAN45859"/>
<dbReference type="BioCyc" id="MetaCyc:MONOMER-16107"/>
<dbReference type="BRENDA" id="1.13.11.50">
    <property type="organism ID" value="103"/>
</dbReference>
<dbReference type="UniPathway" id="UPA00734"/>
<dbReference type="EvolutionaryTrace" id="Q8GNT2"/>
<dbReference type="GO" id="GO:0033752">
    <property type="term" value="F:acetylacetone-cleaving enzyme activity"/>
    <property type="evidence" value="ECO:0007669"/>
    <property type="project" value="UniProtKB-EC"/>
</dbReference>
<dbReference type="GO" id="GO:0046872">
    <property type="term" value="F:metal ion binding"/>
    <property type="evidence" value="ECO:0007669"/>
    <property type="project" value="UniProtKB-KW"/>
</dbReference>
<dbReference type="CDD" id="cd20302">
    <property type="entry name" value="cupin_DAD"/>
    <property type="match status" value="1"/>
</dbReference>
<dbReference type="Gene3D" id="2.60.120.10">
    <property type="entry name" value="Jelly Rolls"/>
    <property type="match status" value="1"/>
</dbReference>
<dbReference type="InterPro" id="IPR025979">
    <property type="entry name" value="ChrR-like_cupin_dom"/>
</dbReference>
<dbReference type="InterPro" id="IPR014710">
    <property type="entry name" value="RmlC-like_jellyroll"/>
</dbReference>
<dbReference type="InterPro" id="IPR011051">
    <property type="entry name" value="RmlC_Cupin_sf"/>
</dbReference>
<dbReference type="Pfam" id="PF12973">
    <property type="entry name" value="Cupin_7"/>
    <property type="match status" value="1"/>
</dbReference>
<dbReference type="SUPFAM" id="SSF51182">
    <property type="entry name" value="RmlC-like cupins"/>
    <property type="match status" value="1"/>
</dbReference>
<feature type="chain" id="PRO_0000079925" description="Acetylacetone-cleaving enzyme">
    <location>
        <begin position="1"/>
        <end position="153"/>
    </location>
</feature>
<feature type="strand" evidence="2">
    <location>
        <begin position="12"/>
        <end position="15"/>
    </location>
</feature>
<feature type="helix" evidence="2">
    <location>
        <begin position="18"/>
        <end position="20"/>
    </location>
</feature>
<feature type="helix" evidence="2">
    <location>
        <begin position="26"/>
        <end position="28"/>
    </location>
</feature>
<feature type="strand" evidence="2">
    <location>
        <begin position="29"/>
        <end position="31"/>
    </location>
</feature>
<feature type="strand" evidence="2">
    <location>
        <begin position="34"/>
        <end position="41"/>
    </location>
</feature>
<feature type="turn" evidence="2">
    <location>
        <begin position="42"/>
        <end position="45"/>
    </location>
</feature>
<feature type="strand" evidence="2">
    <location>
        <begin position="46"/>
        <end position="53"/>
    </location>
</feature>
<feature type="strand" evidence="2">
    <location>
        <begin position="57"/>
        <end position="59"/>
    </location>
</feature>
<feature type="strand" evidence="2">
    <location>
        <begin position="62"/>
        <end position="66"/>
    </location>
</feature>
<feature type="strand" evidence="2">
    <location>
        <begin position="68"/>
        <end position="79"/>
    </location>
</feature>
<feature type="helix" evidence="2">
    <location>
        <begin position="83"/>
        <end position="85"/>
    </location>
</feature>
<feature type="strand" evidence="2">
    <location>
        <begin position="87"/>
        <end position="98"/>
    </location>
</feature>
<feature type="strand" evidence="2">
    <location>
        <begin position="103"/>
        <end position="105"/>
    </location>
</feature>
<feature type="strand" evidence="2">
    <location>
        <begin position="108"/>
        <end position="111"/>
    </location>
</feature>
<feature type="strand" evidence="2">
    <location>
        <begin position="113"/>
        <end position="121"/>
    </location>
</feature>
<feature type="strand" evidence="2">
    <location>
        <begin position="123"/>
        <end position="126"/>
    </location>
</feature>
<feature type="strand" evidence="2">
    <location>
        <begin position="132"/>
        <end position="136"/>
    </location>
</feature>
<feature type="helix" evidence="2">
    <location>
        <begin position="138"/>
        <end position="148"/>
    </location>
</feature>
<protein>
    <recommendedName>
        <fullName>Acetylacetone-cleaving enzyme</fullName>
        <ecNumber evidence="1">1.13.11.50</ecNumber>
    </recommendedName>
    <alternativeName>
        <fullName>Acetylacetone dioxygenase</fullName>
    </alternativeName>
    <alternativeName>
        <fullName>Diketone cleaving dioxygenase</fullName>
    </alternativeName>
    <alternativeName>
        <fullName>Diketone cleaving enzyme</fullName>
    </alternativeName>
</protein>
<proteinExistence type="evidence at protein level"/>
<keyword id="KW-0002">3D-structure</keyword>
<keyword id="KW-0223">Dioxygenase</keyword>
<keyword id="KW-0903">Direct protein sequencing</keyword>
<keyword id="KW-0408">Iron</keyword>
<keyword id="KW-0479">Metal-binding</keyword>
<keyword id="KW-0560">Oxidoreductase</keyword>
<evidence type="ECO:0000269" key="1">
    <source>
    </source>
</evidence>
<evidence type="ECO:0007829" key="2">
    <source>
        <dbReference type="PDB" id="3BAL"/>
    </source>
</evidence>
<name>DKE1_ACIJO</name>
<gene>
    <name type="primary">dke1</name>
</gene>
<organism>
    <name type="scientific">Acinetobacter johnsonii</name>
    <dbReference type="NCBI Taxonomy" id="40214"/>
    <lineage>
        <taxon>Bacteria</taxon>
        <taxon>Pseudomonadati</taxon>
        <taxon>Pseudomonadota</taxon>
        <taxon>Gammaproteobacteria</taxon>
        <taxon>Moraxellales</taxon>
        <taxon>Moraxellaceae</taxon>
        <taxon>Acinetobacter</taxon>
    </lineage>
</organism>
<sequence>MDYCNKKHTAEEYVKISDNNYVPFPEAFSDGGITWQLLHSSPETSSWTAIFNCPAGSSFASHIHAGPGEYFLTKGKMEVRGGEQEGGSTAYAPSYGFESSGALHGKTFFPVESQFYMTFLGPLNFIDDNGKVIASIGWAEAQGAWLATKNEAA</sequence>
<accession>Q8GNT2</accession>